<sequence>MFNLLLVVVGGGIGAGIRHLTNMGALRLVGPNYPWGTMAINIVGSFAMGLFIAILARRGGSNEVRLFVATGIFGGFTTFSAFSLDFATLWERGATLPAFGYALASVIGAIIALFLGLWLARSLP</sequence>
<evidence type="ECO:0000255" key="1">
    <source>
        <dbReference type="HAMAP-Rule" id="MF_00454"/>
    </source>
</evidence>
<proteinExistence type="inferred from homology"/>
<comment type="function">
    <text evidence="1">Fluoride-specific ion channel. Important for reducing fluoride concentration in the cell, thus reducing its toxicity.</text>
</comment>
<comment type="catalytic activity">
    <reaction evidence="1">
        <text>fluoride(in) = fluoride(out)</text>
        <dbReference type="Rhea" id="RHEA:76159"/>
        <dbReference type="ChEBI" id="CHEBI:17051"/>
    </reaction>
    <physiologicalReaction direction="left-to-right" evidence="1">
        <dbReference type="Rhea" id="RHEA:76160"/>
    </physiologicalReaction>
</comment>
<comment type="activity regulation">
    <text evidence="1">Na(+) is not transported, but it plays an essential structural role and its presence is essential for fluoride channel function.</text>
</comment>
<comment type="subcellular location">
    <subcellularLocation>
        <location evidence="1">Cell inner membrane</location>
        <topology evidence="1">Multi-pass membrane protein</topology>
    </subcellularLocation>
</comment>
<comment type="similarity">
    <text evidence="1">Belongs to the fluoride channel Fluc/FEX (TC 1.A.43) family.</text>
</comment>
<gene>
    <name evidence="1" type="primary">fluC</name>
    <name evidence="1" type="synonym">crcB</name>
    <name type="ordered locus">mlr0333</name>
</gene>
<protein>
    <recommendedName>
        <fullName evidence="1">Fluoride-specific ion channel FluC</fullName>
    </recommendedName>
</protein>
<accession>Q98N26</accession>
<feature type="chain" id="PRO_0000110162" description="Fluoride-specific ion channel FluC">
    <location>
        <begin position="1"/>
        <end position="124"/>
    </location>
</feature>
<feature type="transmembrane region" description="Helical" evidence="1">
    <location>
        <begin position="1"/>
        <end position="21"/>
    </location>
</feature>
<feature type="transmembrane region" description="Helical" evidence="1">
    <location>
        <begin position="35"/>
        <end position="55"/>
    </location>
</feature>
<feature type="transmembrane region" description="Helical" evidence="1">
    <location>
        <begin position="66"/>
        <end position="86"/>
    </location>
</feature>
<feature type="transmembrane region" description="Helical" evidence="1">
    <location>
        <begin position="99"/>
        <end position="119"/>
    </location>
</feature>
<feature type="binding site" evidence="1">
    <location>
        <position position="74"/>
    </location>
    <ligand>
        <name>Na(+)</name>
        <dbReference type="ChEBI" id="CHEBI:29101"/>
        <note>structural</note>
    </ligand>
</feature>
<feature type="binding site" evidence="1">
    <location>
        <position position="77"/>
    </location>
    <ligand>
        <name>Na(+)</name>
        <dbReference type="ChEBI" id="CHEBI:29101"/>
        <note>structural</note>
    </ligand>
</feature>
<reference key="1">
    <citation type="journal article" date="2000" name="DNA Res.">
        <title>Complete genome structure of the nitrogen-fixing symbiotic bacterium Mesorhizobium loti.</title>
        <authorList>
            <person name="Kaneko T."/>
            <person name="Nakamura Y."/>
            <person name="Sato S."/>
            <person name="Asamizu E."/>
            <person name="Kato T."/>
            <person name="Sasamoto S."/>
            <person name="Watanabe A."/>
            <person name="Idesawa K."/>
            <person name="Ishikawa A."/>
            <person name="Kawashima K."/>
            <person name="Kimura T."/>
            <person name="Kishida Y."/>
            <person name="Kiyokawa C."/>
            <person name="Kohara M."/>
            <person name="Matsumoto M."/>
            <person name="Matsuno A."/>
            <person name="Mochizuki Y."/>
            <person name="Nakayama S."/>
            <person name="Nakazaki N."/>
            <person name="Shimpo S."/>
            <person name="Sugimoto M."/>
            <person name="Takeuchi C."/>
            <person name="Yamada M."/>
            <person name="Tabata S."/>
        </authorList>
    </citation>
    <scope>NUCLEOTIDE SEQUENCE [LARGE SCALE GENOMIC DNA]</scope>
    <source>
        <strain>LMG 29417 / CECT 9101 / MAFF 303099</strain>
    </source>
</reference>
<name>FLUC_RHILO</name>
<organism>
    <name type="scientific">Mesorhizobium japonicum (strain LMG 29417 / CECT 9101 / MAFF 303099)</name>
    <name type="common">Mesorhizobium loti (strain MAFF 303099)</name>
    <dbReference type="NCBI Taxonomy" id="266835"/>
    <lineage>
        <taxon>Bacteria</taxon>
        <taxon>Pseudomonadati</taxon>
        <taxon>Pseudomonadota</taxon>
        <taxon>Alphaproteobacteria</taxon>
        <taxon>Hyphomicrobiales</taxon>
        <taxon>Phyllobacteriaceae</taxon>
        <taxon>Mesorhizobium</taxon>
    </lineage>
</organism>
<dbReference type="EMBL" id="BA000012">
    <property type="protein sequence ID" value="BAB47937.1"/>
    <property type="molecule type" value="Genomic_DNA"/>
</dbReference>
<dbReference type="RefSeq" id="WP_010909295.1">
    <property type="nucleotide sequence ID" value="NC_002678.2"/>
</dbReference>
<dbReference type="SMR" id="Q98N26"/>
<dbReference type="GeneID" id="66684185"/>
<dbReference type="KEGG" id="mlo:mlr0333"/>
<dbReference type="eggNOG" id="COG0239">
    <property type="taxonomic scope" value="Bacteria"/>
</dbReference>
<dbReference type="HOGENOM" id="CLU_114342_3_0_5"/>
<dbReference type="Proteomes" id="UP000000552">
    <property type="component" value="Chromosome"/>
</dbReference>
<dbReference type="GO" id="GO:0005886">
    <property type="term" value="C:plasma membrane"/>
    <property type="evidence" value="ECO:0007669"/>
    <property type="project" value="UniProtKB-SubCell"/>
</dbReference>
<dbReference type="GO" id="GO:0062054">
    <property type="term" value="F:fluoride channel activity"/>
    <property type="evidence" value="ECO:0007669"/>
    <property type="project" value="UniProtKB-UniRule"/>
</dbReference>
<dbReference type="GO" id="GO:0046872">
    <property type="term" value="F:metal ion binding"/>
    <property type="evidence" value="ECO:0007669"/>
    <property type="project" value="UniProtKB-KW"/>
</dbReference>
<dbReference type="GO" id="GO:0140114">
    <property type="term" value="P:cellular detoxification of fluoride"/>
    <property type="evidence" value="ECO:0007669"/>
    <property type="project" value="UniProtKB-UniRule"/>
</dbReference>
<dbReference type="HAMAP" id="MF_00454">
    <property type="entry name" value="FluC"/>
    <property type="match status" value="1"/>
</dbReference>
<dbReference type="InterPro" id="IPR003691">
    <property type="entry name" value="FluC"/>
</dbReference>
<dbReference type="NCBIfam" id="TIGR00494">
    <property type="entry name" value="crcB"/>
    <property type="match status" value="1"/>
</dbReference>
<dbReference type="NCBIfam" id="NF010791">
    <property type="entry name" value="PRK14195.1"/>
    <property type="match status" value="1"/>
</dbReference>
<dbReference type="PANTHER" id="PTHR28259">
    <property type="entry name" value="FLUORIDE EXPORT PROTEIN 1-RELATED"/>
    <property type="match status" value="1"/>
</dbReference>
<dbReference type="PANTHER" id="PTHR28259:SF1">
    <property type="entry name" value="FLUORIDE EXPORT PROTEIN 1-RELATED"/>
    <property type="match status" value="1"/>
</dbReference>
<dbReference type="Pfam" id="PF02537">
    <property type="entry name" value="CRCB"/>
    <property type="match status" value="1"/>
</dbReference>
<keyword id="KW-0997">Cell inner membrane</keyword>
<keyword id="KW-1003">Cell membrane</keyword>
<keyword id="KW-0407">Ion channel</keyword>
<keyword id="KW-0406">Ion transport</keyword>
<keyword id="KW-0472">Membrane</keyword>
<keyword id="KW-0479">Metal-binding</keyword>
<keyword id="KW-0915">Sodium</keyword>
<keyword id="KW-0812">Transmembrane</keyword>
<keyword id="KW-1133">Transmembrane helix</keyword>
<keyword id="KW-0813">Transport</keyword>